<evidence type="ECO:0000250" key="1">
    <source>
        <dbReference type="UniProtKB" id="P0A953"/>
    </source>
</evidence>
<evidence type="ECO:0000255" key="2">
    <source>
        <dbReference type="PROSITE-ProRule" id="PRU01348"/>
    </source>
</evidence>
<evidence type="ECO:0000305" key="3"/>
<gene>
    <name type="primary">fabB</name>
    <name type="ordered locus">HI_1533</name>
</gene>
<name>FABB_HAEIN</name>
<proteinExistence type="inferred from homology"/>
<feature type="chain" id="PRO_0000180313" description="3-oxoacyl-[acyl-carrier-protein] synthase 1">
    <location>
        <begin position="1"/>
        <end position="406"/>
    </location>
</feature>
<feature type="domain" description="Ketosynthase family 3 (KS3)" evidence="2">
    <location>
        <begin position="1"/>
        <end position="403"/>
    </location>
</feature>
<feature type="active site" description="For beta-ketoacyl synthase activity" evidence="2">
    <location>
        <position position="162"/>
    </location>
</feature>
<feature type="active site" description="For beta-ketoacyl synthase activity" evidence="2">
    <location>
        <position position="297"/>
    </location>
</feature>
<feature type="active site" description="For beta-ketoacyl synthase activity" evidence="2">
    <location>
        <position position="332"/>
    </location>
</feature>
<keyword id="KW-0012">Acyltransferase</keyword>
<keyword id="KW-0963">Cytoplasm</keyword>
<keyword id="KW-0275">Fatty acid biosynthesis</keyword>
<keyword id="KW-0276">Fatty acid metabolism</keyword>
<keyword id="KW-0444">Lipid biosynthesis</keyword>
<keyword id="KW-0443">Lipid metabolism</keyword>
<keyword id="KW-1185">Reference proteome</keyword>
<keyword id="KW-0808">Transferase</keyword>
<comment type="function">
    <text evidence="1">Involved in the type II fatty acid elongation cycle. Catalyzes the elongation of a wide range of acyl-ACP by the addition of two carbons from malonyl-ACP to an acyl acceptor. Can also use unsaturated fatty acids. Catalyzes a key reaction in unsaturated fatty acid (UFA) synthesis, the elongation of the cis-3-decenoyl-ACP produced by FabA.</text>
</comment>
<comment type="catalytic activity">
    <reaction evidence="1">
        <text>a fatty acyl-[ACP] + malonyl-[ACP] + H(+) = a 3-oxoacyl-[ACP] + holo-[ACP] + CO2</text>
        <dbReference type="Rhea" id="RHEA:22836"/>
        <dbReference type="Rhea" id="RHEA-COMP:9623"/>
        <dbReference type="Rhea" id="RHEA-COMP:9685"/>
        <dbReference type="Rhea" id="RHEA-COMP:9916"/>
        <dbReference type="Rhea" id="RHEA-COMP:14125"/>
        <dbReference type="ChEBI" id="CHEBI:15378"/>
        <dbReference type="ChEBI" id="CHEBI:16526"/>
        <dbReference type="ChEBI" id="CHEBI:64479"/>
        <dbReference type="ChEBI" id="CHEBI:78449"/>
        <dbReference type="ChEBI" id="CHEBI:78776"/>
        <dbReference type="ChEBI" id="CHEBI:138651"/>
        <dbReference type="EC" id="2.3.1.41"/>
    </reaction>
    <physiologicalReaction direction="left-to-right" evidence="1">
        <dbReference type="Rhea" id="RHEA:22837"/>
    </physiologicalReaction>
</comment>
<comment type="catalytic activity">
    <reaction evidence="1">
        <text>(3Z)-decenoyl-[ACP] + malonyl-[ACP] + H(+) = 3-oxo-(5Z)-dodecenoyl-[ACP] + holo-[ACP] + CO2</text>
        <dbReference type="Rhea" id="RHEA:54940"/>
        <dbReference type="Rhea" id="RHEA-COMP:9623"/>
        <dbReference type="Rhea" id="RHEA-COMP:9685"/>
        <dbReference type="Rhea" id="RHEA-COMP:9927"/>
        <dbReference type="Rhea" id="RHEA-COMP:14042"/>
        <dbReference type="ChEBI" id="CHEBI:15378"/>
        <dbReference type="ChEBI" id="CHEBI:16526"/>
        <dbReference type="ChEBI" id="CHEBI:64479"/>
        <dbReference type="ChEBI" id="CHEBI:78449"/>
        <dbReference type="ChEBI" id="CHEBI:78798"/>
        <dbReference type="ChEBI" id="CHEBI:138410"/>
    </reaction>
    <physiologicalReaction direction="left-to-right" evidence="1">
        <dbReference type="Rhea" id="RHEA:54941"/>
    </physiologicalReaction>
</comment>
<comment type="pathway">
    <text evidence="1">Lipid metabolism; fatty acid biosynthesis.</text>
</comment>
<comment type="subunit">
    <text evidence="1">Homodimer.</text>
</comment>
<comment type="subcellular location">
    <subcellularLocation>
        <location evidence="1">Cytoplasm</location>
    </subcellularLocation>
</comment>
<comment type="similarity">
    <text evidence="3">Belongs to the thiolase-like superfamily. Beta-ketoacyl-ACP synthases family.</text>
</comment>
<accession>P43710</accession>
<protein>
    <recommendedName>
        <fullName evidence="1">3-oxoacyl-[acyl-carrier-protein] synthase 1</fullName>
        <ecNumber evidence="1">2.3.1.41</ecNumber>
    </recommendedName>
    <alternativeName>
        <fullName evidence="1">3-oxoacyl-[acyl-carrier-protein] synthase I</fullName>
    </alternativeName>
    <alternativeName>
        <fullName evidence="1">Beta-ketoacyl-ACP synthase I</fullName>
        <shortName evidence="1">KAS I</shortName>
    </alternativeName>
</protein>
<organism>
    <name type="scientific">Haemophilus influenzae (strain ATCC 51907 / DSM 11121 / KW20 / Rd)</name>
    <dbReference type="NCBI Taxonomy" id="71421"/>
    <lineage>
        <taxon>Bacteria</taxon>
        <taxon>Pseudomonadati</taxon>
        <taxon>Pseudomonadota</taxon>
        <taxon>Gammaproteobacteria</taxon>
        <taxon>Pasteurellales</taxon>
        <taxon>Pasteurellaceae</taxon>
        <taxon>Haemophilus</taxon>
    </lineage>
</organism>
<dbReference type="EC" id="2.3.1.41" evidence="1"/>
<dbReference type="EMBL" id="L42023">
    <property type="protein sequence ID" value="AAC23183.1"/>
    <property type="molecule type" value="Genomic_DNA"/>
</dbReference>
<dbReference type="PIR" id="A64128">
    <property type="entry name" value="A64128"/>
</dbReference>
<dbReference type="RefSeq" id="NP_439682.1">
    <property type="nucleotide sequence ID" value="NC_000907.1"/>
</dbReference>
<dbReference type="SMR" id="P43710"/>
<dbReference type="STRING" id="71421.HI_1533"/>
<dbReference type="EnsemblBacteria" id="AAC23183">
    <property type="protein sequence ID" value="AAC23183"/>
    <property type="gene ID" value="HI_1533"/>
</dbReference>
<dbReference type="KEGG" id="hin:HI_1533"/>
<dbReference type="PATRIC" id="fig|71421.8.peg.1604"/>
<dbReference type="eggNOG" id="COG0304">
    <property type="taxonomic scope" value="Bacteria"/>
</dbReference>
<dbReference type="HOGENOM" id="CLU_000022_69_2_6"/>
<dbReference type="OrthoDB" id="9808669at2"/>
<dbReference type="PhylomeDB" id="P43710"/>
<dbReference type="BioCyc" id="HINF71421:G1GJ1-1555-MONOMER"/>
<dbReference type="UniPathway" id="UPA00094"/>
<dbReference type="Proteomes" id="UP000000579">
    <property type="component" value="Chromosome"/>
</dbReference>
<dbReference type="GO" id="GO:0005829">
    <property type="term" value="C:cytosol"/>
    <property type="evidence" value="ECO:0000318"/>
    <property type="project" value="GO_Central"/>
</dbReference>
<dbReference type="GO" id="GO:0004315">
    <property type="term" value="F:3-oxoacyl-[acyl-carrier-protein] synthase activity"/>
    <property type="evidence" value="ECO:0000318"/>
    <property type="project" value="GO_Central"/>
</dbReference>
<dbReference type="GO" id="GO:0006633">
    <property type="term" value="P:fatty acid biosynthetic process"/>
    <property type="evidence" value="ECO:0000318"/>
    <property type="project" value="GO_Central"/>
</dbReference>
<dbReference type="CDD" id="cd00834">
    <property type="entry name" value="KAS_I_II"/>
    <property type="match status" value="1"/>
</dbReference>
<dbReference type="FunFam" id="3.40.47.10:FF:000005">
    <property type="entry name" value="3-oxoacyl-[acyl-carrier-protein] synthase I"/>
    <property type="match status" value="1"/>
</dbReference>
<dbReference type="FunFam" id="3.40.47.10:FF:000006">
    <property type="entry name" value="3-oxoacyl-[acyl-carrier-protein] synthase I"/>
    <property type="match status" value="1"/>
</dbReference>
<dbReference type="Gene3D" id="3.40.47.10">
    <property type="match status" value="2"/>
</dbReference>
<dbReference type="InterPro" id="IPR000794">
    <property type="entry name" value="Beta-ketoacyl_synthase"/>
</dbReference>
<dbReference type="InterPro" id="IPR018201">
    <property type="entry name" value="Ketoacyl_synth_AS"/>
</dbReference>
<dbReference type="InterPro" id="IPR014031">
    <property type="entry name" value="Ketoacyl_synth_C"/>
</dbReference>
<dbReference type="InterPro" id="IPR014030">
    <property type="entry name" value="Ketoacyl_synth_N"/>
</dbReference>
<dbReference type="InterPro" id="IPR020841">
    <property type="entry name" value="PKS_Beta-ketoAc_synthase_dom"/>
</dbReference>
<dbReference type="InterPro" id="IPR016039">
    <property type="entry name" value="Thiolase-like"/>
</dbReference>
<dbReference type="NCBIfam" id="NF005589">
    <property type="entry name" value="PRK07314.1"/>
    <property type="match status" value="1"/>
</dbReference>
<dbReference type="NCBIfam" id="NF005935">
    <property type="entry name" value="PRK07967.1"/>
    <property type="match status" value="1"/>
</dbReference>
<dbReference type="PANTHER" id="PTHR11712:SF306">
    <property type="entry name" value="3-OXOACYL-[ACYL-CARRIER-PROTEIN] SYNTHASE 1"/>
    <property type="match status" value="1"/>
</dbReference>
<dbReference type="PANTHER" id="PTHR11712">
    <property type="entry name" value="POLYKETIDE SYNTHASE-RELATED"/>
    <property type="match status" value="1"/>
</dbReference>
<dbReference type="Pfam" id="PF00109">
    <property type="entry name" value="ketoacyl-synt"/>
    <property type="match status" value="1"/>
</dbReference>
<dbReference type="Pfam" id="PF02801">
    <property type="entry name" value="Ketoacyl-synt_C"/>
    <property type="match status" value="1"/>
</dbReference>
<dbReference type="SMART" id="SM00825">
    <property type="entry name" value="PKS_KS"/>
    <property type="match status" value="1"/>
</dbReference>
<dbReference type="SUPFAM" id="SSF53901">
    <property type="entry name" value="Thiolase-like"/>
    <property type="match status" value="2"/>
</dbReference>
<dbReference type="PROSITE" id="PS00606">
    <property type="entry name" value="KS3_1"/>
    <property type="match status" value="1"/>
</dbReference>
<dbReference type="PROSITE" id="PS52004">
    <property type="entry name" value="KS3_2"/>
    <property type="match status" value="1"/>
</dbReference>
<sequence>MRRTVITGFGIISSIGNNKEEVLASLKAGKSGIEVVPEFVEMNMRSHVAGTIKLNPSEHIDRKVFRFMGDAAAYAYLSMREAIEDAGLTEDQVSNDRTGLVIGAGTGSAHNQLVACDAVRGPRGVKAIGPYAVTKTMASSVSACLATPYKIRGVNYSMSSACATSAHCIGHAVELIQLGKQDVVFAGGAEELSWECATEFDAMGAVSTKYNETPEKASRAYDANRDGFVIAGGGAVVVVEELEHALARGAKIYAEIVGYGATSDGYDMVAPSGEGAERCMKQAMATVDTPIDYINVHGTSTPVGDVKELGAIKNVFGDKIPAISSTKSMTGHSLGAAGAHEAIYTLLMLDNDFIAPSINIETLDEAAEGCNIVTETKENAGLQTVMSNSFGFGGTNATLIFKRYNG</sequence>
<reference key="1">
    <citation type="journal article" date="1995" name="Science">
        <title>Whole-genome random sequencing and assembly of Haemophilus influenzae Rd.</title>
        <authorList>
            <person name="Fleischmann R.D."/>
            <person name="Adams M.D."/>
            <person name="White O."/>
            <person name="Clayton R.A."/>
            <person name="Kirkness E.F."/>
            <person name="Kerlavage A.R."/>
            <person name="Bult C.J."/>
            <person name="Tomb J.-F."/>
            <person name="Dougherty B.A."/>
            <person name="Merrick J.M."/>
            <person name="McKenney K."/>
            <person name="Sutton G.G."/>
            <person name="FitzHugh W."/>
            <person name="Fields C.A."/>
            <person name="Gocayne J.D."/>
            <person name="Scott J.D."/>
            <person name="Shirley R."/>
            <person name="Liu L.-I."/>
            <person name="Glodek A."/>
            <person name="Kelley J.M."/>
            <person name="Weidman J.F."/>
            <person name="Phillips C.A."/>
            <person name="Spriggs T."/>
            <person name="Hedblom E."/>
            <person name="Cotton M.D."/>
            <person name="Utterback T.R."/>
            <person name="Hanna M.C."/>
            <person name="Nguyen D.T."/>
            <person name="Saudek D.M."/>
            <person name="Brandon R.C."/>
            <person name="Fine L.D."/>
            <person name="Fritchman J.L."/>
            <person name="Fuhrmann J.L."/>
            <person name="Geoghagen N.S.M."/>
            <person name="Gnehm C.L."/>
            <person name="McDonald L.A."/>
            <person name="Small K.V."/>
            <person name="Fraser C.M."/>
            <person name="Smith H.O."/>
            <person name="Venter J.C."/>
        </authorList>
    </citation>
    <scope>NUCLEOTIDE SEQUENCE [LARGE SCALE GENOMIC DNA]</scope>
    <source>
        <strain>ATCC 51907 / DSM 11121 / KW20 / Rd</strain>
    </source>
</reference>